<feature type="chain" id="PRO_0000297231" description="3-methyl-2-oxobutanoate hydroxymethyltransferase 1">
    <location>
        <begin position="1"/>
        <end position="271"/>
    </location>
</feature>
<feature type="active site" description="Proton acceptor" evidence="1">
    <location>
        <position position="189"/>
    </location>
</feature>
<feature type="binding site" evidence="1">
    <location>
        <begin position="53"/>
        <end position="54"/>
    </location>
    <ligand>
        <name>3-methyl-2-oxobutanoate</name>
        <dbReference type="ChEBI" id="CHEBI:11851"/>
    </ligand>
</feature>
<feature type="binding site" evidence="1">
    <location>
        <position position="53"/>
    </location>
    <ligand>
        <name>Mg(2+)</name>
        <dbReference type="ChEBI" id="CHEBI:18420"/>
    </ligand>
</feature>
<feature type="binding site" evidence="1">
    <location>
        <position position="92"/>
    </location>
    <ligand>
        <name>3-methyl-2-oxobutanoate</name>
        <dbReference type="ChEBI" id="CHEBI:11851"/>
    </ligand>
</feature>
<feature type="binding site" evidence="1">
    <location>
        <position position="92"/>
    </location>
    <ligand>
        <name>Mg(2+)</name>
        <dbReference type="ChEBI" id="CHEBI:18420"/>
    </ligand>
</feature>
<feature type="binding site" evidence="1">
    <location>
        <position position="120"/>
    </location>
    <ligand>
        <name>3-methyl-2-oxobutanoate</name>
        <dbReference type="ChEBI" id="CHEBI:11851"/>
    </ligand>
</feature>
<feature type="binding site" evidence="1">
    <location>
        <position position="122"/>
    </location>
    <ligand>
        <name>Mg(2+)</name>
        <dbReference type="ChEBI" id="CHEBI:18420"/>
    </ligand>
</feature>
<accession>Q0BI15</accession>
<proteinExistence type="inferred from homology"/>
<keyword id="KW-0963">Cytoplasm</keyword>
<keyword id="KW-0460">Magnesium</keyword>
<keyword id="KW-0479">Metal-binding</keyword>
<keyword id="KW-0566">Pantothenate biosynthesis</keyword>
<keyword id="KW-0808">Transferase</keyword>
<sequence>MTYLQESSRPAVTVPKLQAMRDAGEKIAMLTCYDASFAALLDRSGVDVLLIGDSLGNVLQGHTTTLPVSLDDIAYHTACVARAQPRALIIADLPFGTYGTPAEAFASAVKLMRAGAQMIKLEGGEWLAETIRFLVERAVPVCAHVGLTPQSVHAFGGFKVQGKTEAGAAQLLRDARAVEDAGAQLVVLEAVPTLVASEVTHMLKIPTIGIGAGTDCSGQVLVLHDMLGIFPGKRPRFVKDFMQGQPTIQAAVEAYVRAVKDSSFPGPEHSF</sequence>
<dbReference type="EC" id="2.1.2.11" evidence="1"/>
<dbReference type="EMBL" id="CP000440">
    <property type="protein sequence ID" value="ABI86208.1"/>
    <property type="molecule type" value="Genomic_DNA"/>
</dbReference>
<dbReference type="SMR" id="Q0BI15"/>
<dbReference type="KEGG" id="bam:Bamb_0649"/>
<dbReference type="PATRIC" id="fig|339670.21.peg.947"/>
<dbReference type="eggNOG" id="COG0413">
    <property type="taxonomic scope" value="Bacteria"/>
</dbReference>
<dbReference type="UniPathway" id="UPA00028">
    <property type="reaction ID" value="UER00003"/>
</dbReference>
<dbReference type="Proteomes" id="UP000000662">
    <property type="component" value="Chromosome 1"/>
</dbReference>
<dbReference type="GO" id="GO:0005737">
    <property type="term" value="C:cytoplasm"/>
    <property type="evidence" value="ECO:0007669"/>
    <property type="project" value="UniProtKB-SubCell"/>
</dbReference>
<dbReference type="GO" id="GO:0003864">
    <property type="term" value="F:3-methyl-2-oxobutanoate hydroxymethyltransferase activity"/>
    <property type="evidence" value="ECO:0007669"/>
    <property type="project" value="UniProtKB-UniRule"/>
</dbReference>
<dbReference type="GO" id="GO:0000287">
    <property type="term" value="F:magnesium ion binding"/>
    <property type="evidence" value="ECO:0007669"/>
    <property type="project" value="TreeGrafter"/>
</dbReference>
<dbReference type="GO" id="GO:0015940">
    <property type="term" value="P:pantothenate biosynthetic process"/>
    <property type="evidence" value="ECO:0007669"/>
    <property type="project" value="UniProtKB-UniRule"/>
</dbReference>
<dbReference type="CDD" id="cd06557">
    <property type="entry name" value="KPHMT-like"/>
    <property type="match status" value="1"/>
</dbReference>
<dbReference type="FunFam" id="3.20.20.60:FF:000003">
    <property type="entry name" value="3-methyl-2-oxobutanoate hydroxymethyltransferase"/>
    <property type="match status" value="1"/>
</dbReference>
<dbReference type="Gene3D" id="3.20.20.60">
    <property type="entry name" value="Phosphoenolpyruvate-binding domains"/>
    <property type="match status" value="1"/>
</dbReference>
<dbReference type="HAMAP" id="MF_00156">
    <property type="entry name" value="PanB"/>
    <property type="match status" value="1"/>
</dbReference>
<dbReference type="InterPro" id="IPR003700">
    <property type="entry name" value="Pantoate_hydroxy_MeTrfase"/>
</dbReference>
<dbReference type="InterPro" id="IPR015813">
    <property type="entry name" value="Pyrv/PenolPyrv_kinase-like_dom"/>
</dbReference>
<dbReference type="InterPro" id="IPR040442">
    <property type="entry name" value="Pyrv_kinase-like_dom_sf"/>
</dbReference>
<dbReference type="NCBIfam" id="TIGR00222">
    <property type="entry name" value="panB"/>
    <property type="match status" value="1"/>
</dbReference>
<dbReference type="NCBIfam" id="NF001452">
    <property type="entry name" value="PRK00311.1"/>
    <property type="match status" value="1"/>
</dbReference>
<dbReference type="PANTHER" id="PTHR20881">
    <property type="entry name" value="3-METHYL-2-OXOBUTANOATE HYDROXYMETHYLTRANSFERASE"/>
    <property type="match status" value="1"/>
</dbReference>
<dbReference type="PANTHER" id="PTHR20881:SF0">
    <property type="entry name" value="3-METHYL-2-OXOBUTANOATE HYDROXYMETHYLTRANSFERASE"/>
    <property type="match status" value="1"/>
</dbReference>
<dbReference type="Pfam" id="PF02548">
    <property type="entry name" value="Pantoate_transf"/>
    <property type="match status" value="1"/>
</dbReference>
<dbReference type="PIRSF" id="PIRSF000388">
    <property type="entry name" value="Pantoate_hydroxy_MeTrfase"/>
    <property type="match status" value="1"/>
</dbReference>
<dbReference type="SUPFAM" id="SSF51621">
    <property type="entry name" value="Phosphoenolpyruvate/pyruvate domain"/>
    <property type="match status" value="1"/>
</dbReference>
<evidence type="ECO:0000255" key="1">
    <source>
        <dbReference type="HAMAP-Rule" id="MF_00156"/>
    </source>
</evidence>
<gene>
    <name evidence="1" type="primary">panB1</name>
    <name type="ordered locus">Bamb_0649</name>
</gene>
<protein>
    <recommendedName>
        <fullName evidence="1">3-methyl-2-oxobutanoate hydroxymethyltransferase 1</fullName>
        <ecNumber evidence="1">2.1.2.11</ecNumber>
    </recommendedName>
    <alternativeName>
        <fullName evidence="1">Ketopantoate hydroxymethyltransferase 1</fullName>
        <shortName evidence="1">KPHMT 1</shortName>
    </alternativeName>
</protein>
<name>PANB1_BURCM</name>
<reference key="1">
    <citation type="submission" date="2006-08" db="EMBL/GenBank/DDBJ databases">
        <title>Complete sequence of chromosome 1 of Burkholderia cepacia AMMD.</title>
        <authorList>
            <person name="Copeland A."/>
            <person name="Lucas S."/>
            <person name="Lapidus A."/>
            <person name="Barry K."/>
            <person name="Detter J.C."/>
            <person name="Glavina del Rio T."/>
            <person name="Hammon N."/>
            <person name="Israni S."/>
            <person name="Pitluck S."/>
            <person name="Bruce D."/>
            <person name="Chain P."/>
            <person name="Malfatti S."/>
            <person name="Shin M."/>
            <person name="Vergez L."/>
            <person name="Schmutz J."/>
            <person name="Larimer F."/>
            <person name="Land M."/>
            <person name="Hauser L."/>
            <person name="Kyrpides N."/>
            <person name="Kim E."/>
            <person name="Parke J."/>
            <person name="Coenye T."/>
            <person name="Konstantinidis K."/>
            <person name="Ramette A."/>
            <person name="Tiedje J."/>
            <person name="Richardson P."/>
        </authorList>
    </citation>
    <scope>NUCLEOTIDE SEQUENCE [LARGE SCALE GENOMIC DNA]</scope>
    <source>
        <strain>ATCC BAA-244 / DSM 16087 / CCUG 44356 / LMG 19182 / AMMD</strain>
    </source>
</reference>
<organism>
    <name type="scientific">Burkholderia ambifaria (strain ATCC BAA-244 / DSM 16087 / CCUG 44356 / LMG 19182 / AMMD)</name>
    <name type="common">Burkholderia cepacia (strain AMMD)</name>
    <dbReference type="NCBI Taxonomy" id="339670"/>
    <lineage>
        <taxon>Bacteria</taxon>
        <taxon>Pseudomonadati</taxon>
        <taxon>Pseudomonadota</taxon>
        <taxon>Betaproteobacteria</taxon>
        <taxon>Burkholderiales</taxon>
        <taxon>Burkholderiaceae</taxon>
        <taxon>Burkholderia</taxon>
        <taxon>Burkholderia cepacia complex</taxon>
    </lineage>
</organism>
<comment type="function">
    <text evidence="1">Catalyzes the reversible reaction in which hydroxymethyl group from 5,10-methylenetetrahydrofolate is transferred onto alpha-ketoisovalerate to form ketopantoate.</text>
</comment>
<comment type="catalytic activity">
    <reaction evidence="1">
        <text>3-methyl-2-oxobutanoate + (6R)-5,10-methylene-5,6,7,8-tetrahydrofolate + H2O = 2-dehydropantoate + (6S)-5,6,7,8-tetrahydrofolate</text>
        <dbReference type="Rhea" id="RHEA:11824"/>
        <dbReference type="ChEBI" id="CHEBI:11561"/>
        <dbReference type="ChEBI" id="CHEBI:11851"/>
        <dbReference type="ChEBI" id="CHEBI:15377"/>
        <dbReference type="ChEBI" id="CHEBI:15636"/>
        <dbReference type="ChEBI" id="CHEBI:57453"/>
        <dbReference type="EC" id="2.1.2.11"/>
    </reaction>
</comment>
<comment type="cofactor">
    <cofactor evidence="1">
        <name>Mg(2+)</name>
        <dbReference type="ChEBI" id="CHEBI:18420"/>
    </cofactor>
    <text evidence="1">Binds 1 Mg(2+) ion per subunit.</text>
</comment>
<comment type="pathway">
    <text evidence="1">Cofactor biosynthesis; (R)-pantothenate biosynthesis; (R)-pantoate from 3-methyl-2-oxobutanoate: step 1/2.</text>
</comment>
<comment type="subunit">
    <text evidence="1">Homodecamer; pentamer of dimers.</text>
</comment>
<comment type="subcellular location">
    <subcellularLocation>
        <location evidence="1">Cytoplasm</location>
    </subcellularLocation>
</comment>
<comment type="similarity">
    <text evidence="1">Belongs to the PanB family.</text>
</comment>